<keyword id="KW-1185">Reference proteome</keyword>
<keyword id="KW-0677">Repeat</keyword>
<proteinExistence type="predicted"/>
<name>Y1152_SYNY3</name>
<dbReference type="EMBL" id="BA000022">
    <property type="protein sequence ID" value="BAA18315.1"/>
    <property type="molecule type" value="Genomic_DNA"/>
</dbReference>
<dbReference type="PIR" id="S75856">
    <property type="entry name" value="S75856"/>
</dbReference>
<dbReference type="SMR" id="P74221"/>
<dbReference type="IntAct" id="P74221">
    <property type="interactions" value="3"/>
</dbReference>
<dbReference type="STRING" id="1148.gene:10499191"/>
<dbReference type="PaxDb" id="1148-1653401"/>
<dbReference type="EnsemblBacteria" id="BAA18315">
    <property type="protein sequence ID" value="BAA18315"/>
    <property type="gene ID" value="BAA18315"/>
</dbReference>
<dbReference type="KEGG" id="syn:slr1152"/>
<dbReference type="eggNOG" id="COG1357">
    <property type="taxonomic scope" value="Bacteria"/>
</dbReference>
<dbReference type="InParanoid" id="P74221"/>
<dbReference type="PhylomeDB" id="P74221"/>
<dbReference type="Proteomes" id="UP000001425">
    <property type="component" value="Chromosome"/>
</dbReference>
<dbReference type="Gene3D" id="2.160.20.80">
    <property type="entry name" value="E3 ubiquitin-protein ligase SopA"/>
    <property type="match status" value="2"/>
</dbReference>
<dbReference type="InterPro" id="IPR001646">
    <property type="entry name" value="5peptide_repeat"/>
</dbReference>
<dbReference type="PANTHER" id="PTHR47485">
    <property type="entry name" value="THYLAKOID LUMENAL 17.4 KDA PROTEIN, CHLOROPLASTIC"/>
    <property type="match status" value="1"/>
</dbReference>
<dbReference type="PANTHER" id="PTHR47485:SF1">
    <property type="entry name" value="THYLAKOID LUMENAL 17.4 KDA PROTEIN, CHLOROPLASTIC"/>
    <property type="match status" value="1"/>
</dbReference>
<dbReference type="Pfam" id="PF00805">
    <property type="entry name" value="Pentapeptide"/>
    <property type="match status" value="4"/>
</dbReference>
<dbReference type="SUPFAM" id="SSF141571">
    <property type="entry name" value="Pentapeptide repeat-like"/>
    <property type="match status" value="2"/>
</dbReference>
<sequence>MLSLIKIAAAQTQWPKRDNSKYSRHGVSLSMNINPLLRAYEHGVRRFPRENLQNADLSGFTLISVDFERTNLIGSNLQRTFLTKARLGHCQMNWADLTYAKLNQADLSHADLTKASLYGAFAVKTNFKGAKLSGATLAHANLRGANLEQTNLTGANLFAANLREANFQKADFSWANLQEACLSLANLRDARLWATDLRRAFMKEMDLSALSLHGLAMDGAKLTGSCLRDTNLSHSSLRGANLRGADLTGANLTGVDLTGADLMGANLTQVVWHDAVVEGVNWEEAIADQSMFREGILGLGNHHNHRSHNVHQGRQGLNISCFGGLQAAYVI</sequence>
<reference key="1">
    <citation type="journal article" date="1996" name="DNA Res.">
        <title>Sequence analysis of the genome of the unicellular cyanobacterium Synechocystis sp. strain PCC6803. II. Sequence determination of the entire genome and assignment of potential protein-coding regions.</title>
        <authorList>
            <person name="Kaneko T."/>
            <person name="Sato S."/>
            <person name="Kotani H."/>
            <person name="Tanaka A."/>
            <person name="Asamizu E."/>
            <person name="Nakamura Y."/>
            <person name="Miyajima N."/>
            <person name="Hirosawa M."/>
            <person name="Sugiura M."/>
            <person name="Sasamoto S."/>
            <person name="Kimura T."/>
            <person name="Hosouchi T."/>
            <person name="Matsuno A."/>
            <person name="Muraki A."/>
            <person name="Nakazaki N."/>
            <person name="Naruo K."/>
            <person name="Okumura S."/>
            <person name="Shimpo S."/>
            <person name="Takeuchi C."/>
            <person name="Wada T."/>
            <person name="Watanabe A."/>
            <person name="Yamada M."/>
            <person name="Yasuda M."/>
            <person name="Tabata S."/>
        </authorList>
    </citation>
    <scope>NUCLEOTIDE SEQUENCE [LARGE SCALE GENOMIC DNA]</scope>
    <source>
        <strain>ATCC 27184 / PCC 6803 / Kazusa</strain>
    </source>
</reference>
<protein>
    <recommendedName>
        <fullName>Uncharacterized protein slr1152</fullName>
    </recommendedName>
</protein>
<feature type="chain" id="PRO_0000217681" description="Uncharacterized protein slr1152">
    <location>
        <begin position="1"/>
        <end position="331"/>
    </location>
</feature>
<feature type="domain" description="Pentapeptide repeat 1">
    <location>
        <begin position="50"/>
        <end position="89"/>
    </location>
</feature>
<feature type="domain" description="Pentapeptide repeat 2">
    <location>
        <begin position="90"/>
        <end position="129"/>
    </location>
</feature>
<feature type="domain" description="Pentapeptide repeat 3">
    <location>
        <begin position="140"/>
        <end position="179"/>
    </location>
</feature>
<feature type="domain" description="Pentapeptide repeat 4">
    <location>
        <begin position="185"/>
        <end position="224"/>
    </location>
</feature>
<feature type="domain" description="Pentapeptide repeat 5">
    <location>
        <begin position="230"/>
        <end position="269"/>
    </location>
</feature>
<gene>
    <name type="ordered locus">slr1152</name>
</gene>
<organism>
    <name type="scientific">Synechocystis sp. (strain ATCC 27184 / PCC 6803 / Kazusa)</name>
    <dbReference type="NCBI Taxonomy" id="1111708"/>
    <lineage>
        <taxon>Bacteria</taxon>
        <taxon>Bacillati</taxon>
        <taxon>Cyanobacteriota</taxon>
        <taxon>Cyanophyceae</taxon>
        <taxon>Synechococcales</taxon>
        <taxon>Merismopediaceae</taxon>
        <taxon>Synechocystis</taxon>
    </lineage>
</organism>
<accession>P74221</accession>